<protein>
    <recommendedName>
        <fullName evidence="1">Phosphoenolpyruvate carboxykinase (ATP)</fullName>
        <shortName evidence="1">PCK</shortName>
        <shortName evidence="1">PEP carboxykinase</shortName>
        <shortName evidence="1">PEPCK</shortName>
        <ecNumber evidence="1">4.1.1.49</ecNumber>
    </recommendedName>
</protein>
<name>PCKA_CAMJE</name>
<sequence length="524" mass="59054">MKKFDKLGLDNIKEIFHNLSYDELNAHEKANNEGLSTDNDTFCVDTGIFTGRSPKDKYFVKQDPSSKYIAWGKVNQPITKELFDKLLTKAKQELSGKKIYVQDVFCGASLQSRKAVRFVTEIAWQAHFVKNMFIRPSQEELENFKADFIVYNACKCINEDYKQDGLNSEVFVIFNVEENIAVIGGTWYGGEMKKGIFSMMNYWLPLENKLSMHCSANVGEKDDVALFFGLSGTGKTTLSTDPKRRLIGDDEHGWDDEGVFNFEGGCYAKTINLDPEHEPEIYGAIKRNALLENVVLRADKSVDYADASKTENTRVSYPIEHIENHEPSLKAGHPKNIIFLSADAFGILPPVSKLSKEQAMYYFLSGYTAKVAGTERGITEPQATFSACFGEPFMPLHPTVYARLLGEKIEKHEVNVYLVNTGWSGGSYGVGKRMSIKATRACINAILDGSITKCEFENFEVFDLAIPKALEGVESVLLNPINTWLDKNAYIATRDKLAHMFIQNFKRYEDVKEGIEFSKFGPKI</sequence>
<organism>
    <name type="scientific">Campylobacter jejuni subsp. jejuni serotype O:2 (strain ATCC 700819 / NCTC 11168)</name>
    <dbReference type="NCBI Taxonomy" id="192222"/>
    <lineage>
        <taxon>Bacteria</taxon>
        <taxon>Pseudomonadati</taxon>
        <taxon>Campylobacterota</taxon>
        <taxon>Epsilonproteobacteria</taxon>
        <taxon>Campylobacterales</taxon>
        <taxon>Campylobacteraceae</taxon>
        <taxon>Campylobacter</taxon>
    </lineage>
</organism>
<comment type="function">
    <text evidence="1">Involved in the gluconeogenesis. Catalyzes the conversion of oxaloacetate (OAA) to phosphoenolpyruvate (PEP) through direct phosphoryl transfer between the nucleoside triphosphate and OAA.</text>
</comment>
<comment type="catalytic activity">
    <reaction evidence="1">
        <text>oxaloacetate + ATP = phosphoenolpyruvate + ADP + CO2</text>
        <dbReference type="Rhea" id="RHEA:18617"/>
        <dbReference type="ChEBI" id="CHEBI:16452"/>
        <dbReference type="ChEBI" id="CHEBI:16526"/>
        <dbReference type="ChEBI" id="CHEBI:30616"/>
        <dbReference type="ChEBI" id="CHEBI:58702"/>
        <dbReference type="ChEBI" id="CHEBI:456216"/>
        <dbReference type="EC" id="4.1.1.49"/>
    </reaction>
</comment>
<comment type="cofactor">
    <cofactor evidence="1">
        <name>Mn(2+)</name>
        <dbReference type="ChEBI" id="CHEBI:29035"/>
    </cofactor>
    <text evidence="1">Binds 1 Mn(2+) ion per subunit.</text>
</comment>
<comment type="pathway">
    <text evidence="1">Carbohydrate biosynthesis; gluconeogenesis.</text>
</comment>
<comment type="subcellular location">
    <subcellularLocation>
        <location evidence="1">Cytoplasm</location>
    </subcellularLocation>
</comment>
<comment type="similarity">
    <text evidence="1">Belongs to the phosphoenolpyruvate carboxykinase (ATP) family.</text>
</comment>
<evidence type="ECO:0000255" key="1">
    <source>
        <dbReference type="HAMAP-Rule" id="MF_00453"/>
    </source>
</evidence>
<reference key="1">
    <citation type="journal article" date="2000" name="Nature">
        <title>The genome sequence of the food-borne pathogen Campylobacter jejuni reveals hypervariable sequences.</title>
        <authorList>
            <person name="Parkhill J."/>
            <person name="Wren B.W."/>
            <person name="Mungall K.L."/>
            <person name="Ketley J.M."/>
            <person name="Churcher C.M."/>
            <person name="Basham D."/>
            <person name="Chillingworth T."/>
            <person name="Davies R.M."/>
            <person name="Feltwell T."/>
            <person name="Holroyd S."/>
            <person name="Jagels K."/>
            <person name="Karlyshev A.V."/>
            <person name="Moule S."/>
            <person name="Pallen M.J."/>
            <person name="Penn C.W."/>
            <person name="Quail M.A."/>
            <person name="Rajandream M.A."/>
            <person name="Rutherford K.M."/>
            <person name="van Vliet A.H.M."/>
            <person name="Whitehead S."/>
            <person name="Barrell B.G."/>
        </authorList>
    </citation>
    <scope>NUCLEOTIDE SEQUENCE [LARGE SCALE GENOMIC DNA]</scope>
    <source>
        <strain>ATCC 700819 / NCTC 11168</strain>
    </source>
</reference>
<accession>Q9PP01</accession>
<accession>Q0P9W7</accession>
<dbReference type="EC" id="4.1.1.49" evidence="1"/>
<dbReference type="EMBL" id="AL111168">
    <property type="protein sequence ID" value="CAL35052.1"/>
    <property type="molecule type" value="Genomic_DNA"/>
</dbReference>
<dbReference type="PIR" id="C81367">
    <property type="entry name" value="C81367"/>
</dbReference>
<dbReference type="RefSeq" id="WP_002853265.1">
    <property type="nucleotide sequence ID" value="NZ_SZUC01000001.1"/>
</dbReference>
<dbReference type="RefSeq" id="YP_002344330.1">
    <property type="nucleotide sequence ID" value="NC_002163.1"/>
</dbReference>
<dbReference type="SMR" id="Q9PP01"/>
<dbReference type="IntAct" id="Q9PP01">
    <property type="interactions" value="9"/>
</dbReference>
<dbReference type="STRING" id="192222.Cj0932c"/>
<dbReference type="PaxDb" id="192222-Cj0932c"/>
<dbReference type="EnsemblBacteria" id="CAL35052">
    <property type="protein sequence ID" value="CAL35052"/>
    <property type="gene ID" value="Cj0932c"/>
</dbReference>
<dbReference type="GeneID" id="905227"/>
<dbReference type="KEGG" id="cje:Cj0932c"/>
<dbReference type="PATRIC" id="fig|192222.6.peg.916"/>
<dbReference type="eggNOG" id="COG1866">
    <property type="taxonomic scope" value="Bacteria"/>
</dbReference>
<dbReference type="HOGENOM" id="CLU_018247_0_1_7"/>
<dbReference type="OrthoDB" id="9806325at2"/>
<dbReference type="UniPathway" id="UPA00138"/>
<dbReference type="Proteomes" id="UP000000799">
    <property type="component" value="Chromosome"/>
</dbReference>
<dbReference type="GO" id="GO:0005829">
    <property type="term" value="C:cytosol"/>
    <property type="evidence" value="ECO:0007669"/>
    <property type="project" value="TreeGrafter"/>
</dbReference>
<dbReference type="GO" id="GO:0005524">
    <property type="term" value="F:ATP binding"/>
    <property type="evidence" value="ECO:0007669"/>
    <property type="project" value="UniProtKB-UniRule"/>
</dbReference>
<dbReference type="GO" id="GO:0046872">
    <property type="term" value="F:metal ion binding"/>
    <property type="evidence" value="ECO:0007669"/>
    <property type="project" value="UniProtKB-KW"/>
</dbReference>
<dbReference type="GO" id="GO:0004612">
    <property type="term" value="F:phosphoenolpyruvate carboxykinase (ATP) activity"/>
    <property type="evidence" value="ECO:0007669"/>
    <property type="project" value="UniProtKB-UniRule"/>
</dbReference>
<dbReference type="GO" id="GO:0006094">
    <property type="term" value="P:gluconeogenesis"/>
    <property type="evidence" value="ECO:0007669"/>
    <property type="project" value="UniProtKB-UniRule"/>
</dbReference>
<dbReference type="CDD" id="cd00484">
    <property type="entry name" value="PEPCK_ATP"/>
    <property type="match status" value="1"/>
</dbReference>
<dbReference type="FunFam" id="2.170.8.10:FF:000001">
    <property type="entry name" value="Phosphoenolpyruvate carboxykinase (ATP)"/>
    <property type="match status" value="1"/>
</dbReference>
<dbReference type="FunFam" id="3.40.449.10:FF:000001">
    <property type="entry name" value="Phosphoenolpyruvate carboxykinase (ATP)"/>
    <property type="match status" value="1"/>
</dbReference>
<dbReference type="Gene3D" id="3.90.228.20">
    <property type="match status" value="1"/>
</dbReference>
<dbReference type="Gene3D" id="3.40.449.10">
    <property type="entry name" value="Phosphoenolpyruvate Carboxykinase, domain 1"/>
    <property type="match status" value="1"/>
</dbReference>
<dbReference type="Gene3D" id="2.170.8.10">
    <property type="entry name" value="Phosphoenolpyruvate Carboxykinase, domain 2"/>
    <property type="match status" value="1"/>
</dbReference>
<dbReference type="HAMAP" id="MF_00453">
    <property type="entry name" value="PEPCK_ATP"/>
    <property type="match status" value="1"/>
</dbReference>
<dbReference type="InterPro" id="IPR001272">
    <property type="entry name" value="PEP_carboxykinase_ATP"/>
</dbReference>
<dbReference type="InterPro" id="IPR013035">
    <property type="entry name" value="PEP_carboxykinase_C"/>
</dbReference>
<dbReference type="InterPro" id="IPR008210">
    <property type="entry name" value="PEP_carboxykinase_N"/>
</dbReference>
<dbReference type="InterPro" id="IPR015994">
    <property type="entry name" value="PEPCK_ATP_CS"/>
</dbReference>
<dbReference type="NCBIfam" id="TIGR00224">
    <property type="entry name" value="pckA"/>
    <property type="match status" value="1"/>
</dbReference>
<dbReference type="NCBIfam" id="NF006819">
    <property type="entry name" value="PRK09344.1-1"/>
    <property type="match status" value="1"/>
</dbReference>
<dbReference type="NCBIfam" id="NF006820">
    <property type="entry name" value="PRK09344.1-2"/>
    <property type="match status" value="1"/>
</dbReference>
<dbReference type="NCBIfam" id="NF006821">
    <property type="entry name" value="PRK09344.1-3"/>
    <property type="match status" value="1"/>
</dbReference>
<dbReference type="PANTHER" id="PTHR30031:SF0">
    <property type="entry name" value="PHOSPHOENOLPYRUVATE CARBOXYKINASE (ATP)"/>
    <property type="match status" value="1"/>
</dbReference>
<dbReference type="PANTHER" id="PTHR30031">
    <property type="entry name" value="PHOSPHOENOLPYRUVATE CARBOXYKINASE ATP"/>
    <property type="match status" value="1"/>
</dbReference>
<dbReference type="Pfam" id="PF01293">
    <property type="entry name" value="PEPCK_ATP"/>
    <property type="match status" value="1"/>
</dbReference>
<dbReference type="PIRSF" id="PIRSF006294">
    <property type="entry name" value="PEP_crbxkin"/>
    <property type="match status" value="1"/>
</dbReference>
<dbReference type="SUPFAM" id="SSF68923">
    <property type="entry name" value="PEP carboxykinase N-terminal domain"/>
    <property type="match status" value="1"/>
</dbReference>
<dbReference type="SUPFAM" id="SSF53795">
    <property type="entry name" value="PEP carboxykinase-like"/>
    <property type="match status" value="1"/>
</dbReference>
<dbReference type="PROSITE" id="PS00532">
    <property type="entry name" value="PEPCK_ATP"/>
    <property type="match status" value="1"/>
</dbReference>
<proteinExistence type="inferred from homology"/>
<feature type="chain" id="PRO_0000203815" description="Phosphoenolpyruvate carboxykinase (ATP)">
    <location>
        <begin position="1"/>
        <end position="524"/>
    </location>
</feature>
<feature type="binding site" evidence="1">
    <location>
        <position position="52"/>
    </location>
    <ligand>
        <name>substrate</name>
    </ligand>
</feature>
<feature type="binding site" evidence="1">
    <location>
        <position position="188"/>
    </location>
    <ligand>
        <name>substrate</name>
    </ligand>
</feature>
<feature type="binding site" evidence="1">
    <location>
        <position position="194"/>
    </location>
    <ligand>
        <name>ATP</name>
        <dbReference type="ChEBI" id="CHEBI:30616"/>
    </ligand>
</feature>
<feature type="binding site" evidence="1">
    <location>
        <position position="194"/>
    </location>
    <ligand>
        <name>Mn(2+)</name>
        <dbReference type="ChEBI" id="CHEBI:29035"/>
    </ligand>
</feature>
<feature type="binding site" evidence="1">
    <location>
        <position position="194"/>
    </location>
    <ligand>
        <name>substrate</name>
    </ligand>
</feature>
<feature type="binding site" evidence="1">
    <location>
        <position position="213"/>
    </location>
    <ligand>
        <name>ATP</name>
        <dbReference type="ChEBI" id="CHEBI:30616"/>
    </ligand>
</feature>
<feature type="binding site" evidence="1">
    <location>
        <position position="213"/>
    </location>
    <ligand>
        <name>Mn(2+)</name>
        <dbReference type="ChEBI" id="CHEBI:29035"/>
    </ligand>
</feature>
<feature type="binding site" evidence="1">
    <location>
        <begin position="229"/>
        <end position="237"/>
    </location>
    <ligand>
        <name>ATP</name>
        <dbReference type="ChEBI" id="CHEBI:30616"/>
    </ligand>
</feature>
<feature type="binding site" evidence="1">
    <location>
        <position position="250"/>
    </location>
    <ligand>
        <name>Mn(2+)</name>
        <dbReference type="ChEBI" id="CHEBI:29035"/>
    </ligand>
</feature>
<feature type="binding site" evidence="1">
    <location>
        <position position="278"/>
    </location>
    <ligand>
        <name>ATP</name>
        <dbReference type="ChEBI" id="CHEBI:30616"/>
    </ligand>
</feature>
<feature type="binding site" evidence="1">
    <location>
        <position position="314"/>
    </location>
    <ligand>
        <name>ATP</name>
        <dbReference type="ChEBI" id="CHEBI:30616"/>
    </ligand>
</feature>
<feature type="binding site" evidence="1">
    <location>
        <position position="314"/>
    </location>
    <ligand>
        <name>substrate</name>
    </ligand>
</feature>
<feature type="binding site" evidence="1">
    <location>
        <position position="439"/>
    </location>
    <ligand>
        <name>ATP</name>
        <dbReference type="ChEBI" id="CHEBI:30616"/>
    </ligand>
</feature>
<keyword id="KW-0067">ATP-binding</keyword>
<keyword id="KW-0963">Cytoplasm</keyword>
<keyword id="KW-0210">Decarboxylase</keyword>
<keyword id="KW-0312">Gluconeogenesis</keyword>
<keyword id="KW-0456">Lyase</keyword>
<keyword id="KW-0464">Manganese</keyword>
<keyword id="KW-0479">Metal-binding</keyword>
<keyword id="KW-0547">Nucleotide-binding</keyword>
<keyword id="KW-1185">Reference proteome</keyword>
<gene>
    <name evidence="1" type="primary">pckA</name>
    <name type="ordered locus">Cj0932c</name>
</gene>